<accession>Q322V1</accession>
<gene>
    <name evidence="1" type="primary">yohJ</name>
    <name type="ordered locus">SBO_1000</name>
</gene>
<feature type="chain" id="PRO_1000065465" description="UPF0299 membrane protein YohJ">
    <location>
        <begin position="1"/>
        <end position="132"/>
    </location>
</feature>
<feature type="transmembrane region" description="Helical" evidence="1">
    <location>
        <begin position="7"/>
        <end position="27"/>
    </location>
</feature>
<feature type="transmembrane region" description="Helical" evidence="1">
    <location>
        <begin position="31"/>
        <end position="51"/>
    </location>
</feature>
<feature type="transmembrane region" description="Helical" evidence="1">
    <location>
        <begin position="63"/>
        <end position="83"/>
    </location>
</feature>
<feature type="transmembrane region" description="Helical" evidence="1">
    <location>
        <begin position="93"/>
        <end position="113"/>
    </location>
</feature>
<name>YOHJ_SHIBS</name>
<protein>
    <recommendedName>
        <fullName evidence="1">UPF0299 membrane protein YohJ</fullName>
    </recommendedName>
</protein>
<sequence length="132" mass="14579">MSKTLNIIWQYLRAFVLIYACLYAGIFIASLLPVTIPGSIIGMLILFVLLALQILPAKWVNPGCYVLIRYMALLFVPIGVGVMQYFDLLRAQFGPVVVSCAVSTLVVFLVVSWSSQLVHGERKVVGQKGSEE</sequence>
<keyword id="KW-0997">Cell inner membrane</keyword>
<keyword id="KW-1003">Cell membrane</keyword>
<keyword id="KW-0472">Membrane</keyword>
<keyword id="KW-0812">Transmembrane</keyword>
<keyword id="KW-1133">Transmembrane helix</keyword>
<organism>
    <name type="scientific">Shigella boydii serotype 4 (strain Sb227)</name>
    <dbReference type="NCBI Taxonomy" id="300268"/>
    <lineage>
        <taxon>Bacteria</taxon>
        <taxon>Pseudomonadati</taxon>
        <taxon>Pseudomonadota</taxon>
        <taxon>Gammaproteobacteria</taxon>
        <taxon>Enterobacterales</taxon>
        <taxon>Enterobacteriaceae</taxon>
        <taxon>Shigella</taxon>
    </lineage>
</organism>
<proteinExistence type="inferred from homology"/>
<dbReference type="EMBL" id="CP000036">
    <property type="protein sequence ID" value="ABB65657.1"/>
    <property type="molecule type" value="Genomic_DNA"/>
</dbReference>
<dbReference type="RefSeq" id="WP_001295452.1">
    <property type="nucleotide sequence ID" value="NC_007613.1"/>
</dbReference>
<dbReference type="SMR" id="Q322V1"/>
<dbReference type="KEGG" id="sbo:SBO_1000"/>
<dbReference type="HOGENOM" id="CLU_113736_1_1_6"/>
<dbReference type="Proteomes" id="UP000007067">
    <property type="component" value="Chromosome"/>
</dbReference>
<dbReference type="GO" id="GO:0005886">
    <property type="term" value="C:plasma membrane"/>
    <property type="evidence" value="ECO:0007669"/>
    <property type="project" value="UniProtKB-SubCell"/>
</dbReference>
<dbReference type="HAMAP" id="MF_01144">
    <property type="entry name" value="UPF0299"/>
    <property type="match status" value="1"/>
</dbReference>
<dbReference type="InterPro" id="IPR005538">
    <property type="entry name" value="LrgA/CidA"/>
</dbReference>
<dbReference type="InterPro" id="IPR022957">
    <property type="entry name" value="Uncharacterised_UPF0299"/>
</dbReference>
<dbReference type="NCBIfam" id="NF002494">
    <property type="entry name" value="PRK01821.1"/>
    <property type="match status" value="1"/>
</dbReference>
<dbReference type="PANTHER" id="PTHR33931">
    <property type="entry name" value="HOLIN-LIKE PROTEIN CIDA-RELATED"/>
    <property type="match status" value="1"/>
</dbReference>
<dbReference type="PANTHER" id="PTHR33931:SF5">
    <property type="entry name" value="UPF0299 MEMBRANE PROTEIN YOHJ"/>
    <property type="match status" value="1"/>
</dbReference>
<dbReference type="Pfam" id="PF03788">
    <property type="entry name" value="LrgA"/>
    <property type="match status" value="1"/>
</dbReference>
<reference key="1">
    <citation type="journal article" date="2005" name="Nucleic Acids Res.">
        <title>Genome dynamics and diversity of Shigella species, the etiologic agents of bacillary dysentery.</title>
        <authorList>
            <person name="Yang F."/>
            <person name="Yang J."/>
            <person name="Zhang X."/>
            <person name="Chen L."/>
            <person name="Jiang Y."/>
            <person name="Yan Y."/>
            <person name="Tang X."/>
            <person name="Wang J."/>
            <person name="Xiong Z."/>
            <person name="Dong J."/>
            <person name="Xue Y."/>
            <person name="Zhu Y."/>
            <person name="Xu X."/>
            <person name="Sun L."/>
            <person name="Chen S."/>
            <person name="Nie H."/>
            <person name="Peng J."/>
            <person name="Xu J."/>
            <person name="Wang Y."/>
            <person name="Yuan Z."/>
            <person name="Wen Y."/>
            <person name="Yao Z."/>
            <person name="Shen Y."/>
            <person name="Qiang B."/>
            <person name="Hou Y."/>
            <person name="Yu J."/>
            <person name="Jin Q."/>
        </authorList>
    </citation>
    <scope>NUCLEOTIDE SEQUENCE [LARGE SCALE GENOMIC DNA]</scope>
    <source>
        <strain>Sb227</strain>
    </source>
</reference>
<evidence type="ECO:0000255" key="1">
    <source>
        <dbReference type="HAMAP-Rule" id="MF_01144"/>
    </source>
</evidence>
<comment type="subcellular location">
    <subcellularLocation>
        <location evidence="1">Cell inner membrane</location>
        <topology evidence="1">Multi-pass membrane protein</topology>
    </subcellularLocation>
</comment>
<comment type="similarity">
    <text evidence="1">Belongs to the UPF0299 family.</text>
</comment>